<gene>
    <name evidence="1" type="primary">tsf</name>
    <name type="ordered locus">Anae109_0294</name>
</gene>
<name>EFTS_ANADF</name>
<evidence type="ECO:0000255" key="1">
    <source>
        <dbReference type="HAMAP-Rule" id="MF_00050"/>
    </source>
</evidence>
<dbReference type="EMBL" id="CP000769">
    <property type="protein sequence ID" value="ABS24511.1"/>
    <property type="molecule type" value="Genomic_DNA"/>
</dbReference>
<dbReference type="RefSeq" id="WP_011984617.1">
    <property type="nucleotide sequence ID" value="NC_009675.1"/>
</dbReference>
<dbReference type="SMR" id="A7H715"/>
<dbReference type="STRING" id="404589.Anae109_0294"/>
<dbReference type="KEGG" id="afw:Anae109_0294"/>
<dbReference type="eggNOG" id="COG0264">
    <property type="taxonomic scope" value="Bacteria"/>
</dbReference>
<dbReference type="HOGENOM" id="CLU_047155_1_1_7"/>
<dbReference type="OrthoDB" id="9808348at2"/>
<dbReference type="Proteomes" id="UP000006382">
    <property type="component" value="Chromosome"/>
</dbReference>
<dbReference type="GO" id="GO:0005737">
    <property type="term" value="C:cytoplasm"/>
    <property type="evidence" value="ECO:0007669"/>
    <property type="project" value="UniProtKB-SubCell"/>
</dbReference>
<dbReference type="GO" id="GO:0003746">
    <property type="term" value="F:translation elongation factor activity"/>
    <property type="evidence" value="ECO:0007669"/>
    <property type="project" value="UniProtKB-UniRule"/>
</dbReference>
<dbReference type="CDD" id="cd14275">
    <property type="entry name" value="UBA_EF-Ts"/>
    <property type="match status" value="1"/>
</dbReference>
<dbReference type="FunFam" id="1.10.286.20:FF:000001">
    <property type="entry name" value="Elongation factor Ts"/>
    <property type="match status" value="1"/>
</dbReference>
<dbReference type="FunFam" id="1.10.8.10:FF:000001">
    <property type="entry name" value="Elongation factor Ts"/>
    <property type="match status" value="1"/>
</dbReference>
<dbReference type="Gene3D" id="1.10.286.20">
    <property type="match status" value="1"/>
</dbReference>
<dbReference type="Gene3D" id="1.10.8.10">
    <property type="entry name" value="DNA helicase RuvA subunit, C-terminal domain"/>
    <property type="match status" value="1"/>
</dbReference>
<dbReference type="Gene3D" id="3.30.479.20">
    <property type="entry name" value="Elongation factor Ts, dimerisation domain"/>
    <property type="match status" value="1"/>
</dbReference>
<dbReference type="HAMAP" id="MF_00050">
    <property type="entry name" value="EF_Ts"/>
    <property type="match status" value="1"/>
</dbReference>
<dbReference type="InterPro" id="IPR036402">
    <property type="entry name" value="EF-Ts_dimer_sf"/>
</dbReference>
<dbReference type="InterPro" id="IPR001816">
    <property type="entry name" value="Transl_elong_EFTs/EF1B"/>
</dbReference>
<dbReference type="InterPro" id="IPR014039">
    <property type="entry name" value="Transl_elong_EFTs/EF1B_dimer"/>
</dbReference>
<dbReference type="InterPro" id="IPR018101">
    <property type="entry name" value="Transl_elong_Ts_CS"/>
</dbReference>
<dbReference type="InterPro" id="IPR009060">
    <property type="entry name" value="UBA-like_sf"/>
</dbReference>
<dbReference type="NCBIfam" id="TIGR00116">
    <property type="entry name" value="tsf"/>
    <property type="match status" value="2"/>
</dbReference>
<dbReference type="PANTHER" id="PTHR11741">
    <property type="entry name" value="ELONGATION FACTOR TS"/>
    <property type="match status" value="1"/>
</dbReference>
<dbReference type="PANTHER" id="PTHR11741:SF0">
    <property type="entry name" value="ELONGATION FACTOR TS, MITOCHONDRIAL"/>
    <property type="match status" value="1"/>
</dbReference>
<dbReference type="Pfam" id="PF00889">
    <property type="entry name" value="EF_TS"/>
    <property type="match status" value="1"/>
</dbReference>
<dbReference type="SUPFAM" id="SSF54713">
    <property type="entry name" value="Elongation factor Ts (EF-Ts), dimerisation domain"/>
    <property type="match status" value="1"/>
</dbReference>
<dbReference type="SUPFAM" id="SSF46934">
    <property type="entry name" value="UBA-like"/>
    <property type="match status" value="1"/>
</dbReference>
<dbReference type="PROSITE" id="PS01126">
    <property type="entry name" value="EF_TS_1"/>
    <property type="match status" value="1"/>
</dbReference>
<dbReference type="PROSITE" id="PS01127">
    <property type="entry name" value="EF_TS_2"/>
    <property type="match status" value="1"/>
</dbReference>
<protein>
    <recommendedName>
        <fullName evidence="1">Elongation factor Ts</fullName>
        <shortName evidence="1">EF-Ts</shortName>
    </recommendedName>
</protein>
<proteinExistence type="inferred from homology"/>
<organism>
    <name type="scientific">Anaeromyxobacter sp. (strain Fw109-5)</name>
    <dbReference type="NCBI Taxonomy" id="404589"/>
    <lineage>
        <taxon>Bacteria</taxon>
        <taxon>Pseudomonadati</taxon>
        <taxon>Myxococcota</taxon>
        <taxon>Myxococcia</taxon>
        <taxon>Myxococcales</taxon>
        <taxon>Cystobacterineae</taxon>
        <taxon>Anaeromyxobacteraceae</taxon>
        <taxon>Anaeromyxobacter</taxon>
    </lineage>
</organism>
<accession>A7H715</accession>
<reference key="1">
    <citation type="journal article" date="2015" name="Genome Announc.">
        <title>Complete genome sequence of Anaeromyxobacter sp. Fw109-5, an anaerobic, metal-reducing bacterium isolated from a contaminated subsurface environment.</title>
        <authorList>
            <person name="Hwang C."/>
            <person name="Copeland A."/>
            <person name="Lucas S."/>
            <person name="Lapidus A."/>
            <person name="Barry K."/>
            <person name="Glavina Del Rio T."/>
            <person name="Dalin E."/>
            <person name="Tice H."/>
            <person name="Pitluck S."/>
            <person name="Sims D."/>
            <person name="Brettin T."/>
            <person name="Bruce D.C."/>
            <person name="Detter J.C."/>
            <person name="Han C.S."/>
            <person name="Schmutz J."/>
            <person name="Larimer F.W."/>
            <person name="Land M.L."/>
            <person name="Hauser L.J."/>
            <person name="Kyrpides N."/>
            <person name="Lykidis A."/>
            <person name="Richardson P."/>
            <person name="Belieav A."/>
            <person name="Sanford R.A."/>
            <person name="Loeffler F.E."/>
            <person name="Fields M.W."/>
        </authorList>
    </citation>
    <scope>NUCLEOTIDE SEQUENCE [LARGE SCALE GENOMIC DNA]</scope>
    <source>
        <strain>Fw109-5</strain>
    </source>
</reference>
<comment type="function">
    <text evidence="1">Associates with the EF-Tu.GDP complex and induces the exchange of GDP to GTP. It remains bound to the aminoacyl-tRNA.EF-Tu.GTP complex up to the GTP hydrolysis stage on the ribosome.</text>
</comment>
<comment type="subcellular location">
    <subcellularLocation>
        <location evidence="1">Cytoplasm</location>
    </subcellularLocation>
</comment>
<comment type="similarity">
    <text evidence="1">Belongs to the EF-Ts family.</text>
</comment>
<feature type="chain" id="PRO_1000006050" description="Elongation factor Ts">
    <location>
        <begin position="1"/>
        <end position="219"/>
    </location>
</feature>
<feature type="region of interest" description="Involved in Mg(2+) ion dislocation from EF-Tu" evidence="1">
    <location>
        <begin position="82"/>
        <end position="85"/>
    </location>
</feature>
<sequence>MAEVNANMVKELREKTGAGMMDCKKALAEAGGDFAKAEEVLRKKGLAAAAKKSSRAATEGQVASYIHMGGKIGVLVEVNCETDFVARTDGFQALVKDIAMQIAAAAPQWVRRDEVPADVVAKELEIAKAQMRDQKKPEAILEKIAQGKLEKFYEQFCLLDQPFVKEDKKKMSEVLTDAVAKIGENIQVRRFARFVLGEGLEKKQENLAEEVAKAAGLQK</sequence>
<keyword id="KW-0963">Cytoplasm</keyword>
<keyword id="KW-0251">Elongation factor</keyword>
<keyword id="KW-0648">Protein biosynthesis</keyword>
<keyword id="KW-1185">Reference proteome</keyword>